<sequence length="932" mass="106467">MGLTPMMRQYLEVKESCKDCILFFRLGDFYEMFFEDAKVASKELELVLTGRDCGLEERAPMCGIPYHAANTYIGRLVSAGYKIAICEQLEDPSASKGIVKRGIIKIITPGTYTDSSFLEENKNNYIMSFYLDDNMCSMSFADISTGEFNSTHSNFKEAVVLDEISKFAPREIVLEENIKESFIHTIKERFPNISISKIKEENFDYNIDNNLREQFNNFSENEYETIVKKSANGLLYYIFHTQKNILSNINKIDYYSIVDYLTIDVNSRRNLEITENLREKIKKGSLLWVLDKTNTAMGGRQLRRWIEQPLINKTPIENRLNAVEELLNNISLQEDLKEDLKSIYDIERIVGKVASKSVNAKELISLKCSIGKVPYIKKYLSSFKSDLFLNMEQCIDTLEDIHKLLDKALLDNPSLSVKEGNIIKEGFNEEVDSLREAKSNGKKWIASLEQKEKEETGIKSLKVSYNKVFGYFIEITKANLNLVPEGRYIRKQTLSNAERYITPELKEMEEKILGAEEKLIDIEYKLFTEIRDFIEENIDRMQKTARIISDIDCLCSLATVALENNYIKPNINAKDEILIEEGRHPVVEKVIPKGEFISNDSLIDTKENQLILITGPNMAGKSTYMRQVALITIMAQIGSFVPAKEANISICDKIFTRIGASDDLAAGKSTFMVEMWEVSNILKNATSKSLVLLDEVGRGTSTYDGLSIAWSVIEYICNNKNLRCKTLFATHYHELTKLEDNIKGVKNYSVSVSELENEIVFLRKIIRGGADQSYGIEVAKLAGLPSPVINRAKEILQHIEGDKEENSLNITPSKEYKSKDYIEVSKDTLNTKNNLESEIKHDTLSETNTATIIEDESIKEHLCSNKKQIQCKKNNEKSIKKELAVDSFQINFEHIKKDKVIEEIKNIDILNMTPMEGFNKLYDIINKTKDID</sequence>
<accession>B1KSA3</accession>
<dbReference type="EMBL" id="CP000962">
    <property type="protein sequence ID" value="ACA54382.1"/>
    <property type="molecule type" value="Genomic_DNA"/>
</dbReference>
<dbReference type="RefSeq" id="WP_012342496.1">
    <property type="nucleotide sequence ID" value="NC_010520.1"/>
</dbReference>
<dbReference type="SMR" id="B1KSA3"/>
<dbReference type="KEGG" id="cbl:CLK_1181"/>
<dbReference type="HOGENOM" id="CLU_002472_3_1_9"/>
<dbReference type="GO" id="GO:0005829">
    <property type="term" value="C:cytosol"/>
    <property type="evidence" value="ECO:0007669"/>
    <property type="project" value="TreeGrafter"/>
</dbReference>
<dbReference type="GO" id="GO:0005524">
    <property type="term" value="F:ATP binding"/>
    <property type="evidence" value="ECO:0007669"/>
    <property type="project" value="UniProtKB-UniRule"/>
</dbReference>
<dbReference type="GO" id="GO:0140664">
    <property type="term" value="F:ATP-dependent DNA damage sensor activity"/>
    <property type="evidence" value="ECO:0007669"/>
    <property type="project" value="InterPro"/>
</dbReference>
<dbReference type="GO" id="GO:0003684">
    <property type="term" value="F:damaged DNA binding"/>
    <property type="evidence" value="ECO:0007669"/>
    <property type="project" value="UniProtKB-UniRule"/>
</dbReference>
<dbReference type="GO" id="GO:0030983">
    <property type="term" value="F:mismatched DNA binding"/>
    <property type="evidence" value="ECO:0007669"/>
    <property type="project" value="InterPro"/>
</dbReference>
<dbReference type="GO" id="GO:0006298">
    <property type="term" value="P:mismatch repair"/>
    <property type="evidence" value="ECO:0007669"/>
    <property type="project" value="UniProtKB-UniRule"/>
</dbReference>
<dbReference type="CDD" id="cd03284">
    <property type="entry name" value="ABC_MutS1"/>
    <property type="match status" value="1"/>
</dbReference>
<dbReference type="FunFam" id="1.10.1420.10:FF:000007">
    <property type="entry name" value="DNA mismatch repair protein MutS"/>
    <property type="match status" value="1"/>
</dbReference>
<dbReference type="FunFam" id="3.40.1170.10:FF:000001">
    <property type="entry name" value="DNA mismatch repair protein MutS"/>
    <property type="match status" value="1"/>
</dbReference>
<dbReference type="FunFam" id="3.40.50.300:FF:001579">
    <property type="entry name" value="DNA mismatch repair protein MutS"/>
    <property type="match status" value="1"/>
</dbReference>
<dbReference type="Gene3D" id="1.10.1420.10">
    <property type="match status" value="2"/>
</dbReference>
<dbReference type="Gene3D" id="3.40.1170.10">
    <property type="entry name" value="DNA repair protein MutS, domain I"/>
    <property type="match status" value="1"/>
</dbReference>
<dbReference type="Gene3D" id="3.30.420.110">
    <property type="entry name" value="MutS, connector domain"/>
    <property type="match status" value="1"/>
</dbReference>
<dbReference type="Gene3D" id="3.40.50.300">
    <property type="entry name" value="P-loop containing nucleotide triphosphate hydrolases"/>
    <property type="match status" value="1"/>
</dbReference>
<dbReference type="HAMAP" id="MF_00096">
    <property type="entry name" value="MutS"/>
    <property type="match status" value="1"/>
</dbReference>
<dbReference type="InterPro" id="IPR005748">
    <property type="entry name" value="DNA_mismatch_repair_MutS"/>
</dbReference>
<dbReference type="InterPro" id="IPR007695">
    <property type="entry name" value="DNA_mismatch_repair_MutS-lik_N"/>
</dbReference>
<dbReference type="InterPro" id="IPR017261">
    <property type="entry name" value="DNA_mismatch_repair_MutS/MSH"/>
</dbReference>
<dbReference type="InterPro" id="IPR000432">
    <property type="entry name" value="DNA_mismatch_repair_MutS_C"/>
</dbReference>
<dbReference type="InterPro" id="IPR007861">
    <property type="entry name" value="DNA_mismatch_repair_MutS_clamp"/>
</dbReference>
<dbReference type="InterPro" id="IPR007696">
    <property type="entry name" value="DNA_mismatch_repair_MutS_core"/>
</dbReference>
<dbReference type="InterPro" id="IPR016151">
    <property type="entry name" value="DNA_mismatch_repair_MutS_N"/>
</dbReference>
<dbReference type="InterPro" id="IPR036187">
    <property type="entry name" value="DNA_mismatch_repair_MutS_sf"/>
</dbReference>
<dbReference type="InterPro" id="IPR007860">
    <property type="entry name" value="DNA_mmatch_repair_MutS_con_dom"/>
</dbReference>
<dbReference type="InterPro" id="IPR045076">
    <property type="entry name" value="MutS"/>
</dbReference>
<dbReference type="InterPro" id="IPR036678">
    <property type="entry name" value="MutS_con_dom_sf"/>
</dbReference>
<dbReference type="InterPro" id="IPR027417">
    <property type="entry name" value="P-loop_NTPase"/>
</dbReference>
<dbReference type="NCBIfam" id="TIGR01070">
    <property type="entry name" value="mutS1"/>
    <property type="match status" value="1"/>
</dbReference>
<dbReference type="NCBIfam" id="NF003810">
    <property type="entry name" value="PRK05399.1"/>
    <property type="match status" value="1"/>
</dbReference>
<dbReference type="PANTHER" id="PTHR11361:SF34">
    <property type="entry name" value="DNA MISMATCH REPAIR PROTEIN MSH1, MITOCHONDRIAL"/>
    <property type="match status" value="1"/>
</dbReference>
<dbReference type="PANTHER" id="PTHR11361">
    <property type="entry name" value="DNA MISMATCH REPAIR PROTEIN MUTS FAMILY MEMBER"/>
    <property type="match status" value="1"/>
</dbReference>
<dbReference type="Pfam" id="PF01624">
    <property type="entry name" value="MutS_I"/>
    <property type="match status" value="1"/>
</dbReference>
<dbReference type="Pfam" id="PF05188">
    <property type="entry name" value="MutS_II"/>
    <property type="match status" value="1"/>
</dbReference>
<dbReference type="Pfam" id="PF05192">
    <property type="entry name" value="MutS_III"/>
    <property type="match status" value="1"/>
</dbReference>
<dbReference type="Pfam" id="PF05190">
    <property type="entry name" value="MutS_IV"/>
    <property type="match status" value="1"/>
</dbReference>
<dbReference type="Pfam" id="PF00488">
    <property type="entry name" value="MutS_V"/>
    <property type="match status" value="1"/>
</dbReference>
<dbReference type="PIRSF" id="PIRSF037677">
    <property type="entry name" value="DNA_mis_repair_Msh6"/>
    <property type="match status" value="1"/>
</dbReference>
<dbReference type="SMART" id="SM00534">
    <property type="entry name" value="MUTSac"/>
    <property type="match status" value="1"/>
</dbReference>
<dbReference type="SMART" id="SM00533">
    <property type="entry name" value="MUTSd"/>
    <property type="match status" value="1"/>
</dbReference>
<dbReference type="SUPFAM" id="SSF55271">
    <property type="entry name" value="DNA repair protein MutS, domain I"/>
    <property type="match status" value="1"/>
</dbReference>
<dbReference type="SUPFAM" id="SSF53150">
    <property type="entry name" value="DNA repair protein MutS, domain II"/>
    <property type="match status" value="1"/>
</dbReference>
<dbReference type="SUPFAM" id="SSF48334">
    <property type="entry name" value="DNA repair protein MutS, domain III"/>
    <property type="match status" value="1"/>
</dbReference>
<dbReference type="SUPFAM" id="SSF52540">
    <property type="entry name" value="P-loop containing nucleoside triphosphate hydrolases"/>
    <property type="match status" value="1"/>
</dbReference>
<dbReference type="PROSITE" id="PS00486">
    <property type="entry name" value="DNA_MISMATCH_REPAIR_2"/>
    <property type="match status" value="1"/>
</dbReference>
<reference key="1">
    <citation type="journal article" date="2007" name="PLoS ONE">
        <title>Analysis of the neurotoxin complex genes in Clostridium botulinum A1-A4 and B1 strains: BoNT/A3, /Ba4 and /B1 clusters are located within plasmids.</title>
        <authorList>
            <person name="Smith T.J."/>
            <person name="Hill K.K."/>
            <person name="Foley B.T."/>
            <person name="Detter J.C."/>
            <person name="Munk A.C."/>
            <person name="Bruce D.C."/>
            <person name="Doggett N.A."/>
            <person name="Smith L.A."/>
            <person name="Marks J.D."/>
            <person name="Xie G."/>
            <person name="Brettin T.S."/>
        </authorList>
    </citation>
    <scope>NUCLEOTIDE SEQUENCE [LARGE SCALE GENOMIC DNA]</scope>
    <source>
        <strain>Loch Maree / Type A3</strain>
    </source>
</reference>
<evidence type="ECO:0000255" key="1">
    <source>
        <dbReference type="HAMAP-Rule" id="MF_00096"/>
    </source>
</evidence>
<gene>
    <name evidence="1" type="primary">mutS</name>
    <name type="ordered locus">CLK_1181</name>
</gene>
<protein>
    <recommendedName>
        <fullName evidence="1">DNA mismatch repair protein MutS</fullName>
    </recommendedName>
</protein>
<name>MUTS_CLOBM</name>
<proteinExistence type="inferred from homology"/>
<comment type="function">
    <text evidence="1">This protein is involved in the repair of mismatches in DNA. It is possible that it carries out the mismatch recognition step. This protein has a weak ATPase activity.</text>
</comment>
<comment type="similarity">
    <text evidence="1">Belongs to the DNA mismatch repair MutS family.</text>
</comment>
<keyword id="KW-0067">ATP-binding</keyword>
<keyword id="KW-0227">DNA damage</keyword>
<keyword id="KW-0234">DNA repair</keyword>
<keyword id="KW-0238">DNA-binding</keyword>
<keyword id="KW-0547">Nucleotide-binding</keyword>
<feature type="chain" id="PRO_0000335140" description="DNA mismatch repair protein MutS">
    <location>
        <begin position="1"/>
        <end position="932"/>
    </location>
</feature>
<feature type="binding site" evidence="1">
    <location>
        <begin position="615"/>
        <end position="622"/>
    </location>
    <ligand>
        <name>ATP</name>
        <dbReference type="ChEBI" id="CHEBI:30616"/>
    </ligand>
</feature>
<organism>
    <name type="scientific">Clostridium botulinum (strain Loch Maree / Type A3)</name>
    <dbReference type="NCBI Taxonomy" id="498214"/>
    <lineage>
        <taxon>Bacteria</taxon>
        <taxon>Bacillati</taxon>
        <taxon>Bacillota</taxon>
        <taxon>Clostridia</taxon>
        <taxon>Eubacteriales</taxon>
        <taxon>Clostridiaceae</taxon>
        <taxon>Clostridium</taxon>
    </lineage>
</organism>